<accession>Q32LC1</accession>
<accession>G5E591</accession>
<dbReference type="EMBL" id="DAAA02035539">
    <property type="status" value="NOT_ANNOTATED_CDS"/>
    <property type="molecule type" value="Genomic_DNA"/>
</dbReference>
<dbReference type="EMBL" id="BC109652">
    <property type="protein sequence ID" value="AAI09653.1"/>
    <property type="molecule type" value="mRNA"/>
</dbReference>
<dbReference type="RefSeq" id="NP_001033174.1">
    <property type="nucleotide sequence ID" value="NM_001038085.2"/>
</dbReference>
<dbReference type="RefSeq" id="XP_005214241.1">
    <property type="nucleotide sequence ID" value="XM_005214184.5"/>
</dbReference>
<dbReference type="RefSeq" id="XP_005214243.1">
    <property type="nucleotide sequence ID" value="XM_005214186.3"/>
</dbReference>
<dbReference type="RefSeq" id="XP_010809412.1">
    <property type="nucleotide sequence ID" value="XM_010811110.4"/>
</dbReference>
<dbReference type="RefSeq" id="XP_059748517.1">
    <property type="nucleotide sequence ID" value="XM_059892534.1"/>
</dbReference>
<dbReference type="SMR" id="Q32LC1"/>
<dbReference type="FunCoup" id="Q32LC1">
    <property type="interactions" value="2322"/>
</dbReference>
<dbReference type="STRING" id="9913.ENSBTAP00000010127"/>
<dbReference type="PaxDb" id="9913-ENSBTAP00000010127"/>
<dbReference type="Ensembl" id="ENSBTAT00000010127.6">
    <property type="protein sequence ID" value="ENSBTAP00000010127.4"/>
    <property type="gene ID" value="ENSBTAG00000063884.1"/>
</dbReference>
<dbReference type="Ensembl" id="ENSBTAT00000090302.1">
    <property type="protein sequence ID" value="ENSBTAP00000076188.1"/>
    <property type="gene ID" value="ENSBTAG00000063884.1"/>
</dbReference>
<dbReference type="Ensembl" id="ENSBTAT00000092778.1">
    <property type="protein sequence ID" value="ENSBTAP00000089818.1"/>
    <property type="gene ID" value="ENSBTAG00000063884.1"/>
</dbReference>
<dbReference type="Ensembl" id="ENSBTAT00000099014.1">
    <property type="protein sequence ID" value="ENSBTAP00000086692.1"/>
    <property type="gene ID" value="ENSBTAG00000063884.1"/>
</dbReference>
<dbReference type="GeneID" id="511723"/>
<dbReference type="KEGG" id="bta:511723"/>
<dbReference type="CTD" id="10557"/>
<dbReference type="VEuPathDB" id="HostDB:ENSBTAG00000007702"/>
<dbReference type="eggNOG" id="KOG3387">
    <property type="taxonomic scope" value="Eukaryota"/>
</dbReference>
<dbReference type="GeneTree" id="ENSGT00390000007526"/>
<dbReference type="HOGENOM" id="CLU_082744_0_0_1"/>
<dbReference type="InParanoid" id="Q32LC1"/>
<dbReference type="OMA" id="NQQVSGW"/>
<dbReference type="OrthoDB" id="20109at2759"/>
<dbReference type="TreeFam" id="TF332558"/>
<dbReference type="Reactome" id="R-BTA-6791226">
    <property type="pathway name" value="Major pathway of rRNA processing in the nucleolus and cytosol"/>
</dbReference>
<dbReference type="Proteomes" id="UP000009136">
    <property type="component" value="Chromosome 13"/>
</dbReference>
<dbReference type="Bgee" id="ENSBTAG00000007702">
    <property type="expression patterns" value="Expressed in oocyte and 107 other cell types or tissues"/>
</dbReference>
<dbReference type="GO" id="GO:0001650">
    <property type="term" value="C:fibrillar center"/>
    <property type="evidence" value="ECO:0000318"/>
    <property type="project" value="GO_Central"/>
</dbReference>
<dbReference type="GO" id="GO:0030681">
    <property type="term" value="C:multimeric ribonuclease P complex"/>
    <property type="evidence" value="ECO:0000250"/>
    <property type="project" value="UniProtKB"/>
</dbReference>
<dbReference type="GO" id="GO:0005655">
    <property type="term" value="C:nucleolar ribonuclease P complex"/>
    <property type="evidence" value="ECO:0007669"/>
    <property type="project" value="InterPro"/>
</dbReference>
<dbReference type="GO" id="GO:0005730">
    <property type="term" value="C:nucleolus"/>
    <property type="evidence" value="ECO:0000250"/>
    <property type="project" value="UniProtKB"/>
</dbReference>
<dbReference type="GO" id="GO:0000172">
    <property type="term" value="C:ribonuclease MRP complex"/>
    <property type="evidence" value="ECO:0007669"/>
    <property type="project" value="InterPro"/>
</dbReference>
<dbReference type="GO" id="GO:0004526">
    <property type="term" value="F:ribonuclease P activity"/>
    <property type="evidence" value="ECO:0007669"/>
    <property type="project" value="UniProtKB-EC"/>
</dbReference>
<dbReference type="GO" id="GO:0033204">
    <property type="term" value="F:ribonuclease P RNA binding"/>
    <property type="evidence" value="ECO:0000250"/>
    <property type="project" value="UniProtKB"/>
</dbReference>
<dbReference type="GO" id="GO:0006364">
    <property type="term" value="P:rRNA processing"/>
    <property type="evidence" value="ECO:0007669"/>
    <property type="project" value="UniProtKB-KW"/>
</dbReference>
<dbReference type="GO" id="GO:0001682">
    <property type="term" value="P:tRNA 5'-leader removal"/>
    <property type="evidence" value="ECO:0000250"/>
    <property type="project" value="UniProtKB"/>
</dbReference>
<dbReference type="FunFam" id="3.30.1330.30:FF:000042">
    <property type="entry name" value="Ribonuclease P protein subunit p38"/>
    <property type="match status" value="1"/>
</dbReference>
<dbReference type="Gene3D" id="3.30.1330.30">
    <property type="match status" value="1"/>
</dbReference>
<dbReference type="InterPro" id="IPR029064">
    <property type="entry name" value="Ribosomal_eL30-like_sf"/>
</dbReference>
<dbReference type="InterPro" id="IPR004038">
    <property type="entry name" value="Ribosomal_eL8/eL30/eS12/Gad45"/>
</dbReference>
<dbReference type="InterPro" id="IPR042848">
    <property type="entry name" value="Rpp38"/>
</dbReference>
<dbReference type="PANTHER" id="PTHR46948">
    <property type="entry name" value="RIBONUCLEASE P PROTEIN SUBUNIT P38"/>
    <property type="match status" value="1"/>
</dbReference>
<dbReference type="PANTHER" id="PTHR46948:SF1">
    <property type="entry name" value="RIBONUCLEASE P PROTEIN SUBUNIT P38"/>
    <property type="match status" value="1"/>
</dbReference>
<dbReference type="Pfam" id="PF01248">
    <property type="entry name" value="Ribosomal_L7Ae"/>
    <property type="match status" value="1"/>
</dbReference>
<dbReference type="SUPFAM" id="SSF55315">
    <property type="entry name" value="L30e-like"/>
    <property type="match status" value="1"/>
</dbReference>
<organism>
    <name type="scientific">Bos taurus</name>
    <name type="common">Bovine</name>
    <dbReference type="NCBI Taxonomy" id="9913"/>
    <lineage>
        <taxon>Eukaryota</taxon>
        <taxon>Metazoa</taxon>
        <taxon>Chordata</taxon>
        <taxon>Craniata</taxon>
        <taxon>Vertebrata</taxon>
        <taxon>Euteleostomi</taxon>
        <taxon>Mammalia</taxon>
        <taxon>Eutheria</taxon>
        <taxon>Laurasiatheria</taxon>
        <taxon>Artiodactyla</taxon>
        <taxon>Ruminantia</taxon>
        <taxon>Pecora</taxon>
        <taxon>Bovidae</taxon>
        <taxon>Bovinae</taxon>
        <taxon>Bos</taxon>
    </lineage>
</organism>
<comment type="function">
    <text evidence="1">Component of ribonuclease P, a ribonucleoprotein complex that generates mature tRNA molecules by cleaving their 5'-ends. Also a component of the MRP ribonuclease complex, which cleaves pre-rRNA sequences.</text>
</comment>
<comment type="subunit">
    <text evidence="1">Component of nuclear RNase P and RNase MRP ribonucleoproteins. RNase P consists of a catalytic RNA moiety and about 10 protein subunits; POP1, POP4, POP5, POP7, RPP14, RPP21, RPP25, RPP30, RPP38 and RPP40. Within the RNase P complex, POP1, POP7 and RPP25 form the 'finger' subcomplex, POP5, RPP14, RPP40 and homodimeric RPP30 form the 'palm' subcomplex, and RPP21, POP4 and RPP38 form the 'wrist' subcomplex. All subunits of the RNase P complex interact with the catalytic RNA. Several subunits of RNase P are also part of the RNase MRP complex. RNase MRP consists of a catalytic RNA moiety and about 8 protein subunits; POP1, POP7, RPP25, RPP30, RPP38, RPP40 and possibly also POP4 and POP5.</text>
</comment>
<comment type="subcellular location">
    <subcellularLocation>
        <location evidence="1">Nucleus</location>
        <location evidence="1">Nucleolus</location>
    </subcellularLocation>
</comment>
<comment type="similarity">
    <text evidence="3">Belongs to the eukaryotic ribosomal protein eL8 family.</text>
</comment>
<gene>
    <name type="primary">RPP38</name>
</gene>
<name>RPP38_BOVIN</name>
<evidence type="ECO:0000250" key="1">
    <source>
        <dbReference type="UniProtKB" id="P78345"/>
    </source>
</evidence>
<evidence type="ECO:0000256" key="2">
    <source>
        <dbReference type="SAM" id="MobiDB-lite"/>
    </source>
</evidence>
<evidence type="ECO:0000305" key="3"/>
<sequence>MAAAPQAPGRGSVRKTRPLPVKTSLNNPYSICWGVLDREDMHFILQTLEDRIQSLGLQKIEDRKRKKKQPPLKKQSGDTSSIDVDTGEDLKKEKPKGDAQASGWTPVDVRKQLAIGINEVTRALERNELLLALACKSAKPAIVTSHLVQLSVSRGVPACQVPRLSERLAPVLGLKCVLALGFKRNTTAFGEELRAILPRVPRLNVAWLQDALEDPRENLQTESLESQDEEILDTSFEDLSKPKRKLAEGQQPVVLQPLKIKKLIPNPNKIRKPPKSKRTASK</sequence>
<reference key="1">
    <citation type="journal article" date="2009" name="Genome Biol.">
        <title>A whole-genome assembly of the domestic cow, Bos taurus.</title>
        <authorList>
            <person name="Zimin A.V."/>
            <person name="Delcher A.L."/>
            <person name="Florea L."/>
            <person name="Kelley D.R."/>
            <person name="Schatz M.C."/>
            <person name="Puiu D."/>
            <person name="Hanrahan F."/>
            <person name="Pertea G."/>
            <person name="Van Tassell C.P."/>
            <person name="Sonstegard T.S."/>
            <person name="Marcais G."/>
            <person name="Roberts M."/>
            <person name="Subramanian P."/>
            <person name="Yorke J.A."/>
            <person name="Salzberg S.L."/>
        </authorList>
    </citation>
    <scope>NUCLEOTIDE SEQUENCE [LARGE SCALE GENOMIC DNA]</scope>
    <source>
        <strain>Hereford</strain>
    </source>
</reference>
<reference key="2">
    <citation type="submission" date="2005-11" db="EMBL/GenBank/DDBJ databases">
        <authorList>
            <consortium name="NIH - Mammalian Gene Collection (MGC) project"/>
        </authorList>
    </citation>
    <scope>NUCLEOTIDE SEQUENCE [LARGE SCALE MRNA]</scope>
    <source>
        <strain>Crossbred X Angus</strain>
        <tissue>Liver</tissue>
    </source>
</reference>
<protein>
    <recommendedName>
        <fullName>Ribonuclease P protein subunit p38</fullName>
        <shortName>RNaseP protein p38</shortName>
    </recommendedName>
</protein>
<proteinExistence type="evidence at transcript level"/>
<feature type="initiator methionine" description="Removed" evidence="1">
    <location>
        <position position="1"/>
    </location>
</feature>
<feature type="chain" id="PRO_0000254030" description="Ribonuclease P protein subunit p38">
    <location>
        <begin position="2"/>
        <end position="282"/>
    </location>
</feature>
<feature type="region of interest" description="Disordered" evidence="2">
    <location>
        <begin position="1"/>
        <end position="21"/>
    </location>
</feature>
<feature type="region of interest" description="Disordered" evidence="2">
    <location>
        <begin position="61"/>
        <end position="103"/>
    </location>
</feature>
<feature type="region of interest" description="Disordered" evidence="2">
    <location>
        <begin position="262"/>
        <end position="282"/>
    </location>
</feature>
<feature type="compositionally biased region" description="Basic and acidic residues" evidence="2">
    <location>
        <begin position="88"/>
        <end position="97"/>
    </location>
</feature>
<feature type="compositionally biased region" description="Basic residues" evidence="2">
    <location>
        <begin position="269"/>
        <end position="282"/>
    </location>
</feature>
<feature type="modified residue" description="N-acetylalanine" evidence="1">
    <location>
        <position position="2"/>
    </location>
</feature>
<feature type="modified residue" description="Phosphoserine" evidence="1">
    <location>
        <position position="12"/>
    </location>
</feature>
<feature type="modified residue" description="Phosphoserine" evidence="1">
    <location>
        <position position="226"/>
    </location>
</feature>
<feature type="modified residue" description="Phosphoserine" evidence="1">
    <location>
        <position position="235"/>
    </location>
</feature>
<feature type="sequence conflict" description="In Ref. 2; AAI09653." ref="2">
    <original>P</original>
    <variation>R</variation>
    <location>
        <position position="157"/>
    </location>
</feature>
<keyword id="KW-0007">Acetylation</keyword>
<keyword id="KW-0539">Nucleus</keyword>
<keyword id="KW-0597">Phosphoprotein</keyword>
<keyword id="KW-1185">Reference proteome</keyword>
<keyword id="KW-0698">rRNA processing</keyword>
<keyword id="KW-0819">tRNA processing</keyword>